<dbReference type="EMBL" id="U82598">
    <property type="protein sequence ID" value="AAB40846.1"/>
    <property type="molecule type" value="Genomic_DNA"/>
</dbReference>
<dbReference type="EMBL" id="U00096">
    <property type="protein sequence ID" value="AAC73746.1"/>
    <property type="molecule type" value="Genomic_DNA"/>
</dbReference>
<dbReference type="EMBL" id="AP009048">
    <property type="protein sequence ID" value="BAA35292.1"/>
    <property type="molecule type" value="Genomic_DNA"/>
</dbReference>
<dbReference type="PIR" id="C64799">
    <property type="entry name" value="C64799"/>
</dbReference>
<dbReference type="RefSeq" id="NP_415178.1">
    <property type="nucleotide sequence ID" value="NC_000913.3"/>
</dbReference>
<dbReference type="RefSeq" id="WP_000367023.1">
    <property type="nucleotide sequence ID" value="NZ_STEB01000031.1"/>
</dbReference>
<dbReference type="BioGRID" id="4259906">
    <property type="interactions" value="11"/>
</dbReference>
<dbReference type="DIP" id="DIP-11366N"/>
<dbReference type="FunCoup" id="P77627">
    <property type="interactions" value="125"/>
</dbReference>
<dbReference type="IntAct" id="P77627">
    <property type="interactions" value="6"/>
</dbReference>
<dbReference type="STRING" id="511145.b0645"/>
<dbReference type="PaxDb" id="511145-b0645"/>
<dbReference type="EnsemblBacteria" id="AAC73746">
    <property type="protein sequence ID" value="AAC73746"/>
    <property type="gene ID" value="b0645"/>
</dbReference>
<dbReference type="GeneID" id="945249"/>
<dbReference type="KEGG" id="ecj:JW0640"/>
<dbReference type="KEGG" id="eco:b0645"/>
<dbReference type="KEGG" id="ecoc:C3026_03225"/>
<dbReference type="PATRIC" id="fig|511145.12.peg.676"/>
<dbReference type="EchoBASE" id="EB3412"/>
<dbReference type="eggNOG" id="ENOG5033JXN">
    <property type="taxonomic scope" value="Bacteria"/>
</dbReference>
<dbReference type="HOGENOM" id="CLU_100196_0_0_6"/>
<dbReference type="InParanoid" id="P77627"/>
<dbReference type="OMA" id="CWFRYSP"/>
<dbReference type="OrthoDB" id="8970044at2"/>
<dbReference type="PhylomeDB" id="P77627"/>
<dbReference type="BioCyc" id="EcoCyc:G6352-MONOMER"/>
<dbReference type="PRO" id="PR:P77627"/>
<dbReference type="Proteomes" id="UP000000625">
    <property type="component" value="Chromosome"/>
</dbReference>
<dbReference type="InterPro" id="IPR009677">
    <property type="entry name" value="DUF1266"/>
</dbReference>
<dbReference type="Pfam" id="PF06889">
    <property type="entry name" value="DUF1266"/>
    <property type="match status" value="1"/>
</dbReference>
<keyword id="KW-1185">Reference proteome</keyword>
<sequence>MDMESQKILFALSTPMEIRNECCLPSHSSPKMYLGTCFFDLSSSWGIDDRDDLLRTIHRMIDNGHAARLAGFYHRWFRYSPCEWRDYLAELNEQGQAYAQFVASTAECCGEGGIKAWDYVRMGFLSRMGVLNNWLSEEESLWIQSRIHLRALRYYSNWRQYFAGYTFGRQYWQSPEDDHLPLLREFLARKEYDDSGNDMFYQLFASDDAYYPTLSWQPLAYYSACPETLKDMSDL</sequence>
<proteinExistence type="predicted"/>
<feature type="chain" id="PRO_0000168682" description="Uncharacterized protein YbeR">
    <location>
        <begin position="1"/>
        <end position="235"/>
    </location>
</feature>
<evidence type="ECO:0000305" key="1"/>
<protein>
    <recommendedName>
        <fullName>Uncharacterized protein YbeR</fullName>
    </recommendedName>
</protein>
<comment type="similarity">
    <text evidence="1">To E.coli YbeU.</text>
</comment>
<name>YBER_ECOLI</name>
<accession>P77627</accession>
<gene>
    <name type="primary">ybeR</name>
    <name type="ordered locus">b0645</name>
    <name type="ordered locus">JW0640</name>
</gene>
<organism>
    <name type="scientific">Escherichia coli (strain K12)</name>
    <dbReference type="NCBI Taxonomy" id="83333"/>
    <lineage>
        <taxon>Bacteria</taxon>
        <taxon>Pseudomonadati</taxon>
        <taxon>Pseudomonadota</taxon>
        <taxon>Gammaproteobacteria</taxon>
        <taxon>Enterobacterales</taxon>
        <taxon>Enterobacteriaceae</taxon>
        <taxon>Escherichia</taxon>
    </lineage>
</organism>
<reference key="1">
    <citation type="journal article" date="1996" name="DNA Res.">
        <title>A 718-kb DNA sequence of the Escherichia coli K-12 genome corresponding to the 12.7-28.0 min region on the linkage map.</title>
        <authorList>
            <person name="Oshima T."/>
            <person name="Aiba H."/>
            <person name="Baba T."/>
            <person name="Fujita K."/>
            <person name="Hayashi K."/>
            <person name="Honjo A."/>
            <person name="Ikemoto K."/>
            <person name="Inada T."/>
            <person name="Itoh T."/>
            <person name="Kajihara M."/>
            <person name="Kanai K."/>
            <person name="Kashimoto K."/>
            <person name="Kimura S."/>
            <person name="Kitagawa M."/>
            <person name="Makino K."/>
            <person name="Masuda S."/>
            <person name="Miki T."/>
            <person name="Mizobuchi K."/>
            <person name="Mori H."/>
            <person name="Motomura K."/>
            <person name="Nakamura Y."/>
            <person name="Nashimoto H."/>
            <person name="Nishio Y."/>
            <person name="Saito N."/>
            <person name="Sampei G."/>
            <person name="Seki Y."/>
            <person name="Tagami H."/>
            <person name="Takemoto K."/>
            <person name="Wada C."/>
            <person name="Yamamoto Y."/>
            <person name="Yano M."/>
            <person name="Horiuchi T."/>
        </authorList>
    </citation>
    <scope>NUCLEOTIDE SEQUENCE [LARGE SCALE GENOMIC DNA]</scope>
    <source>
        <strain>K12 / W3110 / ATCC 27325 / DSM 5911</strain>
    </source>
</reference>
<reference key="2">
    <citation type="submission" date="1997-01" db="EMBL/GenBank/DDBJ databases">
        <title>Sequence of minutes 4-25 of Escherichia coli.</title>
        <authorList>
            <person name="Chung E."/>
            <person name="Allen E."/>
            <person name="Araujo R."/>
            <person name="Aparicio A.M."/>
            <person name="Davis K."/>
            <person name="Duncan M."/>
            <person name="Federspiel N."/>
            <person name="Hyman R."/>
            <person name="Kalman S."/>
            <person name="Komp C."/>
            <person name="Kurdi O."/>
            <person name="Lew H."/>
            <person name="Lin D."/>
            <person name="Namath A."/>
            <person name="Oefner P."/>
            <person name="Roberts D."/>
            <person name="Schramm S."/>
            <person name="Davis R.W."/>
        </authorList>
    </citation>
    <scope>NUCLEOTIDE SEQUENCE [LARGE SCALE GENOMIC DNA]</scope>
    <source>
        <strain>K12 / MG1655 / ATCC 47076</strain>
    </source>
</reference>
<reference key="3">
    <citation type="journal article" date="1997" name="Science">
        <title>The complete genome sequence of Escherichia coli K-12.</title>
        <authorList>
            <person name="Blattner F.R."/>
            <person name="Plunkett G. III"/>
            <person name="Bloch C.A."/>
            <person name="Perna N.T."/>
            <person name="Burland V."/>
            <person name="Riley M."/>
            <person name="Collado-Vides J."/>
            <person name="Glasner J.D."/>
            <person name="Rode C.K."/>
            <person name="Mayhew G.F."/>
            <person name="Gregor J."/>
            <person name="Davis N.W."/>
            <person name="Kirkpatrick H.A."/>
            <person name="Goeden M.A."/>
            <person name="Rose D.J."/>
            <person name="Mau B."/>
            <person name="Shao Y."/>
        </authorList>
    </citation>
    <scope>NUCLEOTIDE SEQUENCE [LARGE SCALE GENOMIC DNA]</scope>
    <source>
        <strain>K12 / MG1655 / ATCC 47076</strain>
    </source>
</reference>
<reference key="4">
    <citation type="journal article" date="2006" name="Mol. Syst. Biol.">
        <title>Highly accurate genome sequences of Escherichia coli K-12 strains MG1655 and W3110.</title>
        <authorList>
            <person name="Hayashi K."/>
            <person name="Morooka N."/>
            <person name="Yamamoto Y."/>
            <person name="Fujita K."/>
            <person name="Isono K."/>
            <person name="Choi S."/>
            <person name="Ohtsubo E."/>
            <person name="Baba T."/>
            <person name="Wanner B.L."/>
            <person name="Mori H."/>
            <person name="Horiuchi T."/>
        </authorList>
    </citation>
    <scope>NUCLEOTIDE SEQUENCE [LARGE SCALE GENOMIC DNA]</scope>
    <source>
        <strain>K12 / W3110 / ATCC 27325 / DSM 5911</strain>
    </source>
</reference>